<sequence length="103" mass="11473">MYAVFQSGGKQHRVSEGQVVRLEKLEKATGETVEFDSVLMVVNGEDVKIGAPVVTGAKVVAEVVAQGRGDKIKIVKFRRRKHSRKQQGHRQWFTEVKITGIQA</sequence>
<gene>
    <name evidence="1" type="primary">rplU</name>
    <name type="ordered locus">MS1599</name>
</gene>
<accession>Q65S54</accession>
<organism>
    <name type="scientific">Mannheimia succiniciproducens (strain KCTC 0769BP / MBEL55E)</name>
    <dbReference type="NCBI Taxonomy" id="221988"/>
    <lineage>
        <taxon>Bacteria</taxon>
        <taxon>Pseudomonadati</taxon>
        <taxon>Pseudomonadota</taxon>
        <taxon>Gammaproteobacteria</taxon>
        <taxon>Pasteurellales</taxon>
        <taxon>Pasteurellaceae</taxon>
        <taxon>Basfia</taxon>
    </lineage>
</organism>
<name>RL21_MANSM</name>
<comment type="function">
    <text evidence="1">This protein binds to 23S rRNA in the presence of protein L20.</text>
</comment>
<comment type="subunit">
    <text evidence="1">Part of the 50S ribosomal subunit. Contacts protein L20.</text>
</comment>
<comment type="similarity">
    <text evidence="1">Belongs to the bacterial ribosomal protein bL21 family.</text>
</comment>
<comment type="sequence caution" evidence="2">
    <conflict type="erroneous initiation">
        <sequence resource="EMBL-CDS" id="AAU38206"/>
    </conflict>
</comment>
<dbReference type="EMBL" id="AE016827">
    <property type="protein sequence ID" value="AAU38206.1"/>
    <property type="status" value="ALT_INIT"/>
    <property type="molecule type" value="Genomic_DNA"/>
</dbReference>
<dbReference type="RefSeq" id="WP_011200769.1">
    <property type="nucleotide sequence ID" value="NC_006300.1"/>
</dbReference>
<dbReference type="SMR" id="Q65S54"/>
<dbReference type="STRING" id="221988.MS1599"/>
<dbReference type="KEGG" id="msu:MS1599"/>
<dbReference type="eggNOG" id="COG0261">
    <property type="taxonomic scope" value="Bacteria"/>
</dbReference>
<dbReference type="HOGENOM" id="CLU_061463_3_1_6"/>
<dbReference type="OrthoDB" id="9813334at2"/>
<dbReference type="Proteomes" id="UP000000607">
    <property type="component" value="Chromosome"/>
</dbReference>
<dbReference type="GO" id="GO:0005737">
    <property type="term" value="C:cytoplasm"/>
    <property type="evidence" value="ECO:0007669"/>
    <property type="project" value="UniProtKB-ARBA"/>
</dbReference>
<dbReference type="GO" id="GO:1990904">
    <property type="term" value="C:ribonucleoprotein complex"/>
    <property type="evidence" value="ECO:0007669"/>
    <property type="project" value="UniProtKB-KW"/>
</dbReference>
<dbReference type="GO" id="GO:0005840">
    <property type="term" value="C:ribosome"/>
    <property type="evidence" value="ECO:0007669"/>
    <property type="project" value="UniProtKB-KW"/>
</dbReference>
<dbReference type="GO" id="GO:0019843">
    <property type="term" value="F:rRNA binding"/>
    <property type="evidence" value="ECO:0007669"/>
    <property type="project" value="UniProtKB-UniRule"/>
</dbReference>
<dbReference type="GO" id="GO:0003735">
    <property type="term" value="F:structural constituent of ribosome"/>
    <property type="evidence" value="ECO:0007669"/>
    <property type="project" value="InterPro"/>
</dbReference>
<dbReference type="GO" id="GO:0006412">
    <property type="term" value="P:translation"/>
    <property type="evidence" value="ECO:0007669"/>
    <property type="project" value="UniProtKB-UniRule"/>
</dbReference>
<dbReference type="HAMAP" id="MF_01363">
    <property type="entry name" value="Ribosomal_bL21"/>
    <property type="match status" value="1"/>
</dbReference>
<dbReference type="InterPro" id="IPR028909">
    <property type="entry name" value="bL21-like"/>
</dbReference>
<dbReference type="InterPro" id="IPR036164">
    <property type="entry name" value="bL21-like_sf"/>
</dbReference>
<dbReference type="InterPro" id="IPR001787">
    <property type="entry name" value="Ribosomal_bL21"/>
</dbReference>
<dbReference type="InterPro" id="IPR018258">
    <property type="entry name" value="Ribosomal_bL21_CS"/>
</dbReference>
<dbReference type="NCBIfam" id="TIGR00061">
    <property type="entry name" value="L21"/>
    <property type="match status" value="1"/>
</dbReference>
<dbReference type="PANTHER" id="PTHR21349">
    <property type="entry name" value="50S RIBOSOMAL PROTEIN L21"/>
    <property type="match status" value="1"/>
</dbReference>
<dbReference type="PANTHER" id="PTHR21349:SF0">
    <property type="entry name" value="LARGE RIBOSOMAL SUBUNIT PROTEIN BL21M"/>
    <property type="match status" value="1"/>
</dbReference>
<dbReference type="Pfam" id="PF00829">
    <property type="entry name" value="Ribosomal_L21p"/>
    <property type="match status" value="1"/>
</dbReference>
<dbReference type="SUPFAM" id="SSF141091">
    <property type="entry name" value="L21p-like"/>
    <property type="match status" value="1"/>
</dbReference>
<dbReference type="PROSITE" id="PS01169">
    <property type="entry name" value="RIBOSOMAL_L21"/>
    <property type="match status" value="1"/>
</dbReference>
<evidence type="ECO:0000255" key="1">
    <source>
        <dbReference type="HAMAP-Rule" id="MF_01363"/>
    </source>
</evidence>
<evidence type="ECO:0000305" key="2"/>
<feature type="chain" id="PRO_0000269340" description="Large ribosomal subunit protein bL21">
    <location>
        <begin position="1"/>
        <end position="103"/>
    </location>
</feature>
<keyword id="KW-0687">Ribonucleoprotein</keyword>
<keyword id="KW-0689">Ribosomal protein</keyword>
<keyword id="KW-0694">RNA-binding</keyword>
<keyword id="KW-0699">rRNA-binding</keyword>
<reference key="1">
    <citation type="journal article" date="2004" name="Nat. Biotechnol.">
        <title>The genome sequence of the capnophilic rumen bacterium Mannheimia succiniciproducens.</title>
        <authorList>
            <person name="Hong S.H."/>
            <person name="Kim J.S."/>
            <person name="Lee S.Y."/>
            <person name="In Y.H."/>
            <person name="Choi S.S."/>
            <person name="Rih J.-K."/>
            <person name="Kim C.H."/>
            <person name="Jeong H."/>
            <person name="Hur C.G."/>
            <person name="Kim J.J."/>
        </authorList>
    </citation>
    <scope>NUCLEOTIDE SEQUENCE [LARGE SCALE GENOMIC DNA]</scope>
    <source>
        <strain>KCTC 0769BP / MBEL55E</strain>
    </source>
</reference>
<protein>
    <recommendedName>
        <fullName evidence="1">Large ribosomal subunit protein bL21</fullName>
    </recommendedName>
    <alternativeName>
        <fullName evidence="2">50S ribosomal protein L21</fullName>
    </alternativeName>
</protein>
<proteinExistence type="inferred from homology"/>